<comment type="function">
    <text evidence="1">Component of the sulfite reductase complex that catalyzes the 6-electron reduction of sulfite to sulfide. This is one of several activities required for the biosynthesis of L-cysteine from sulfate.</text>
</comment>
<comment type="catalytic activity">
    <reaction evidence="1">
        <text>hydrogen sulfide + 3 NADP(+) + 3 H2O = sulfite + 3 NADPH + 4 H(+)</text>
        <dbReference type="Rhea" id="RHEA:13801"/>
        <dbReference type="ChEBI" id="CHEBI:15377"/>
        <dbReference type="ChEBI" id="CHEBI:15378"/>
        <dbReference type="ChEBI" id="CHEBI:17359"/>
        <dbReference type="ChEBI" id="CHEBI:29919"/>
        <dbReference type="ChEBI" id="CHEBI:57783"/>
        <dbReference type="ChEBI" id="CHEBI:58349"/>
        <dbReference type="EC" id="1.8.1.2"/>
    </reaction>
</comment>
<comment type="cofactor">
    <cofactor evidence="1">
        <name>siroheme</name>
        <dbReference type="ChEBI" id="CHEBI:60052"/>
    </cofactor>
    <text evidence="1">Binds 1 siroheme per subunit.</text>
</comment>
<comment type="cofactor">
    <cofactor evidence="1">
        <name>[4Fe-4S] cluster</name>
        <dbReference type="ChEBI" id="CHEBI:49883"/>
    </cofactor>
    <text evidence="1">Binds 1 [4Fe-4S] cluster per subunit.</text>
</comment>
<comment type="pathway">
    <text evidence="1">Sulfur metabolism; hydrogen sulfide biosynthesis; hydrogen sulfide from sulfite (NADPH route): step 1/1.</text>
</comment>
<comment type="subunit">
    <text evidence="1">Alpha(8)-beta(8). The alpha component is a flavoprotein, the beta component is a hemoprotein.</text>
</comment>
<comment type="similarity">
    <text evidence="1">Belongs to the nitrite and sulfite reductase 4Fe-4S domain family.</text>
</comment>
<gene>
    <name evidence="1" type="primary">cysI</name>
    <name type="ordered locus">Sfri_3192</name>
</gene>
<feature type="chain" id="PRO_0000388513" description="Sulfite reductase [NADPH] hemoprotein beta-component">
    <location>
        <begin position="1"/>
        <end position="563"/>
    </location>
</feature>
<feature type="binding site" evidence="1">
    <location>
        <position position="427"/>
    </location>
    <ligand>
        <name>[4Fe-4S] cluster</name>
        <dbReference type="ChEBI" id="CHEBI:49883"/>
    </ligand>
</feature>
<feature type="binding site" evidence="1">
    <location>
        <position position="433"/>
    </location>
    <ligand>
        <name>[4Fe-4S] cluster</name>
        <dbReference type="ChEBI" id="CHEBI:49883"/>
    </ligand>
</feature>
<feature type="binding site" evidence="1">
    <location>
        <position position="472"/>
    </location>
    <ligand>
        <name>[4Fe-4S] cluster</name>
        <dbReference type="ChEBI" id="CHEBI:49883"/>
    </ligand>
</feature>
<feature type="binding site" evidence="1">
    <location>
        <position position="476"/>
    </location>
    <ligand>
        <name>[4Fe-4S] cluster</name>
        <dbReference type="ChEBI" id="CHEBI:49883"/>
    </ligand>
</feature>
<feature type="binding site" description="axial binding residue" evidence="1">
    <location>
        <position position="476"/>
    </location>
    <ligand>
        <name>siroheme</name>
        <dbReference type="ChEBI" id="CHEBI:60052"/>
    </ligand>
    <ligandPart>
        <name>Fe</name>
        <dbReference type="ChEBI" id="CHEBI:18248"/>
    </ligandPart>
</feature>
<evidence type="ECO:0000255" key="1">
    <source>
        <dbReference type="HAMAP-Rule" id="MF_01540"/>
    </source>
</evidence>
<proteinExistence type="inferred from homology"/>
<accession>Q07Y86</accession>
<protein>
    <recommendedName>
        <fullName evidence="1">Sulfite reductase [NADPH] hemoprotein beta-component</fullName>
        <shortName evidence="1">SiR-HP</shortName>
        <shortName evidence="1">SiRHP</shortName>
        <ecNumber evidence="1">1.8.1.2</ecNumber>
    </recommendedName>
</protein>
<organism>
    <name type="scientific">Shewanella frigidimarina (strain NCIMB 400)</name>
    <dbReference type="NCBI Taxonomy" id="318167"/>
    <lineage>
        <taxon>Bacteria</taxon>
        <taxon>Pseudomonadati</taxon>
        <taxon>Pseudomonadota</taxon>
        <taxon>Gammaproteobacteria</taxon>
        <taxon>Alteromonadales</taxon>
        <taxon>Shewanellaceae</taxon>
        <taxon>Shewanella</taxon>
    </lineage>
</organism>
<keyword id="KW-0004">4Fe-4S</keyword>
<keyword id="KW-0028">Amino-acid biosynthesis</keyword>
<keyword id="KW-0198">Cysteine biosynthesis</keyword>
<keyword id="KW-0349">Heme</keyword>
<keyword id="KW-0408">Iron</keyword>
<keyword id="KW-0411">Iron-sulfur</keyword>
<keyword id="KW-0479">Metal-binding</keyword>
<keyword id="KW-0521">NADP</keyword>
<keyword id="KW-0560">Oxidoreductase</keyword>
<keyword id="KW-1185">Reference proteome</keyword>
<sequence length="563" mass="62613">MSEQKLALNEYLKIDSDYLRGDIQEGLDTQVTGSFSDGDQQLIKFHGFYQQDDRDLRNERKEQKLEPLHSFMLRARVPGGICTPAQWLEVDKISSTLTTSNSIRLTTRQTFQYHGIPKRNLKTLIQGLDRAALDSIAACGDVNRNVMCNPNPVESKLHAQAYAVAKHLSDHLLPHTRAYAEIWLDEEKLLGTETVEPVYGKTYLPRKFKMAVAVPPHNDVDVYTNDLGFIAVSEAGELIGFNLVAGGGMGSTHGEVETFPRLADDFGFIKTDDVTKFAEAVMTVQRDWGNRVVRKRARLKYTIVDHGYDAFKAEVEKRAGVKFEPKRDVIIGDRGDRYGWVEGIDNKFHLTLFIESGRIKDMPGQTLQTGLREIAKIHKGDFRMTSNQNMIIAGVAAQDKAEIEGLARKHGLLGQVLSGTRGHSIACVALPTCPLAMAEAERYFPEFIDHIDALQAKHGISEQSIVVRMTGCPNGCARPFAAEIGLVGKAPGRYNLYLGASFEGTRLNKMHKENIQEAEILAELDTLFGRYATERDAGETFGNFTVRIGVVKAVNDAAKDFHA</sequence>
<name>CYSI_SHEFN</name>
<dbReference type="EC" id="1.8.1.2" evidence="1"/>
<dbReference type="EMBL" id="CP000447">
    <property type="protein sequence ID" value="ABI73028.1"/>
    <property type="molecule type" value="Genomic_DNA"/>
</dbReference>
<dbReference type="RefSeq" id="WP_011638631.1">
    <property type="nucleotide sequence ID" value="NC_008345.1"/>
</dbReference>
<dbReference type="SMR" id="Q07Y86"/>
<dbReference type="STRING" id="318167.Sfri_3192"/>
<dbReference type="KEGG" id="sfr:Sfri_3192"/>
<dbReference type="eggNOG" id="COG0155">
    <property type="taxonomic scope" value="Bacteria"/>
</dbReference>
<dbReference type="HOGENOM" id="CLU_001975_3_2_6"/>
<dbReference type="OrthoDB" id="3189055at2"/>
<dbReference type="UniPathway" id="UPA00140">
    <property type="reaction ID" value="UER00207"/>
</dbReference>
<dbReference type="Proteomes" id="UP000000684">
    <property type="component" value="Chromosome"/>
</dbReference>
<dbReference type="GO" id="GO:0009337">
    <property type="term" value="C:sulfite reductase complex (NADPH)"/>
    <property type="evidence" value="ECO:0007669"/>
    <property type="project" value="InterPro"/>
</dbReference>
<dbReference type="GO" id="GO:0051539">
    <property type="term" value="F:4 iron, 4 sulfur cluster binding"/>
    <property type="evidence" value="ECO:0007669"/>
    <property type="project" value="UniProtKB-KW"/>
</dbReference>
<dbReference type="GO" id="GO:0020037">
    <property type="term" value="F:heme binding"/>
    <property type="evidence" value="ECO:0007669"/>
    <property type="project" value="InterPro"/>
</dbReference>
<dbReference type="GO" id="GO:0046872">
    <property type="term" value="F:metal ion binding"/>
    <property type="evidence" value="ECO:0007669"/>
    <property type="project" value="UniProtKB-KW"/>
</dbReference>
<dbReference type="GO" id="GO:0050661">
    <property type="term" value="F:NADP binding"/>
    <property type="evidence" value="ECO:0007669"/>
    <property type="project" value="InterPro"/>
</dbReference>
<dbReference type="GO" id="GO:0050311">
    <property type="term" value="F:sulfite reductase (ferredoxin) activity"/>
    <property type="evidence" value="ECO:0007669"/>
    <property type="project" value="TreeGrafter"/>
</dbReference>
<dbReference type="GO" id="GO:0004783">
    <property type="term" value="F:sulfite reductase (NADPH) activity"/>
    <property type="evidence" value="ECO:0007669"/>
    <property type="project" value="UniProtKB-UniRule"/>
</dbReference>
<dbReference type="GO" id="GO:0019344">
    <property type="term" value="P:cysteine biosynthetic process"/>
    <property type="evidence" value="ECO:0007669"/>
    <property type="project" value="UniProtKB-KW"/>
</dbReference>
<dbReference type="GO" id="GO:0070814">
    <property type="term" value="P:hydrogen sulfide biosynthetic process"/>
    <property type="evidence" value="ECO:0007669"/>
    <property type="project" value="UniProtKB-UniRule"/>
</dbReference>
<dbReference type="GO" id="GO:0000103">
    <property type="term" value="P:sulfate assimilation"/>
    <property type="evidence" value="ECO:0007669"/>
    <property type="project" value="UniProtKB-UniRule"/>
</dbReference>
<dbReference type="FunFam" id="3.30.413.10:FF:000003">
    <property type="entry name" value="Sulfite reductase [NADPH] hemoprotein beta-component"/>
    <property type="match status" value="1"/>
</dbReference>
<dbReference type="FunFam" id="3.30.413.10:FF:000004">
    <property type="entry name" value="Sulfite reductase [NADPH] hemoprotein beta-component"/>
    <property type="match status" value="1"/>
</dbReference>
<dbReference type="Gene3D" id="3.30.413.10">
    <property type="entry name" value="Sulfite Reductase Hemoprotein, domain 1"/>
    <property type="match status" value="2"/>
</dbReference>
<dbReference type="HAMAP" id="MF_01540">
    <property type="entry name" value="CysI"/>
    <property type="match status" value="1"/>
</dbReference>
<dbReference type="InterPro" id="IPR011786">
    <property type="entry name" value="CysI"/>
</dbReference>
<dbReference type="InterPro" id="IPR005117">
    <property type="entry name" value="NiRdtase/SiRdtase_haem-b_fer"/>
</dbReference>
<dbReference type="InterPro" id="IPR036136">
    <property type="entry name" value="Nit/Sulf_reduc_fer-like_dom_sf"/>
</dbReference>
<dbReference type="InterPro" id="IPR006067">
    <property type="entry name" value="NO2/SO3_Rdtase_4Fe4S_dom"/>
</dbReference>
<dbReference type="InterPro" id="IPR045169">
    <property type="entry name" value="NO2/SO3_Rdtase_4Fe4S_prot"/>
</dbReference>
<dbReference type="InterPro" id="IPR045854">
    <property type="entry name" value="NO2/SO3_Rdtase_4Fe4S_sf"/>
</dbReference>
<dbReference type="InterPro" id="IPR006066">
    <property type="entry name" value="NO2/SO3_Rdtase_FeS/sirohaem_BS"/>
</dbReference>
<dbReference type="NCBIfam" id="TIGR02041">
    <property type="entry name" value="CysI"/>
    <property type="match status" value="1"/>
</dbReference>
<dbReference type="NCBIfam" id="NF010029">
    <property type="entry name" value="PRK13504.1"/>
    <property type="match status" value="1"/>
</dbReference>
<dbReference type="PANTHER" id="PTHR11493:SF47">
    <property type="entry name" value="SULFITE REDUCTASE [NADPH] SUBUNIT BETA"/>
    <property type="match status" value="1"/>
</dbReference>
<dbReference type="PANTHER" id="PTHR11493">
    <property type="entry name" value="SULFITE REDUCTASE [NADPH] SUBUNIT BETA-RELATED"/>
    <property type="match status" value="1"/>
</dbReference>
<dbReference type="Pfam" id="PF01077">
    <property type="entry name" value="NIR_SIR"/>
    <property type="match status" value="1"/>
</dbReference>
<dbReference type="Pfam" id="PF03460">
    <property type="entry name" value="NIR_SIR_ferr"/>
    <property type="match status" value="2"/>
</dbReference>
<dbReference type="PRINTS" id="PR00397">
    <property type="entry name" value="SIROHAEM"/>
</dbReference>
<dbReference type="SUPFAM" id="SSF56014">
    <property type="entry name" value="Nitrite and sulphite reductase 4Fe-4S domain-like"/>
    <property type="match status" value="2"/>
</dbReference>
<dbReference type="SUPFAM" id="SSF55124">
    <property type="entry name" value="Nitrite/Sulfite reductase N-terminal domain-like"/>
    <property type="match status" value="2"/>
</dbReference>
<dbReference type="PROSITE" id="PS00365">
    <property type="entry name" value="NIR_SIR"/>
    <property type="match status" value="1"/>
</dbReference>
<reference key="1">
    <citation type="submission" date="2006-08" db="EMBL/GenBank/DDBJ databases">
        <title>Complete sequence of Shewanella frigidimarina NCIMB 400.</title>
        <authorList>
            <consortium name="US DOE Joint Genome Institute"/>
            <person name="Copeland A."/>
            <person name="Lucas S."/>
            <person name="Lapidus A."/>
            <person name="Barry K."/>
            <person name="Detter J.C."/>
            <person name="Glavina del Rio T."/>
            <person name="Hammon N."/>
            <person name="Israni S."/>
            <person name="Dalin E."/>
            <person name="Tice H."/>
            <person name="Pitluck S."/>
            <person name="Fredrickson J.K."/>
            <person name="Kolker E."/>
            <person name="McCuel L.A."/>
            <person name="DiChristina T."/>
            <person name="Nealson K.H."/>
            <person name="Newman D."/>
            <person name="Tiedje J.M."/>
            <person name="Zhou J."/>
            <person name="Romine M.F."/>
            <person name="Culley D.E."/>
            <person name="Serres M."/>
            <person name="Chertkov O."/>
            <person name="Brettin T."/>
            <person name="Bruce D."/>
            <person name="Han C."/>
            <person name="Tapia R."/>
            <person name="Gilna P."/>
            <person name="Schmutz J."/>
            <person name="Larimer F."/>
            <person name="Land M."/>
            <person name="Hauser L."/>
            <person name="Kyrpides N."/>
            <person name="Mikhailova N."/>
            <person name="Richardson P."/>
        </authorList>
    </citation>
    <scope>NUCLEOTIDE SEQUENCE [LARGE SCALE GENOMIC DNA]</scope>
    <source>
        <strain>NCIMB 400</strain>
    </source>
</reference>